<organism>
    <name type="scientific">Lophuromys flavopunctatus</name>
    <name type="common">Yellow-spotted brush-furred rat</name>
    <dbReference type="NCBI Taxonomy" id="51348"/>
    <lineage>
        <taxon>Eukaryota</taxon>
        <taxon>Metazoa</taxon>
        <taxon>Chordata</taxon>
        <taxon>Craniata</taxon>
        <taxon>Vertebrata</taxon>
        <taxon>Euteleostomi</taxon>
        <taxon>Mammalia</taxon>
        <taxon>Eutheria</taxon>
        <taxon>Euarchontoglires</taxon>
        <taxon>Glires</taxon>
        <taxon>Rodentia</taxon>
        <taxon>Myomorpha</taxon>
        <taxon>Muroidea</taxon>
        <taxon>Muridae</taxon>
        <taxon>Deomyinae</taxon>
        <taxon>Lophuromys</taxon>
    </lineage>
</organism>
<dbReference type="EC" id="7.1.1.9"/>
<dbReference type="EMBL" id="DQ019087">
    <property type="protein sequence ID" value="ABA28353.1"/>
    <property type="molecule type" value="Genomic_DNA"/>
</dbReference>
<dbReference type="SMR" id="Q38S47"/>
<dbReference type="GO" id="GO:0005743">
    <property type="term" value="C:mitochondrial inner membrane"/>
    <property type="evidence" value="ECO:0007669"/>
    <property type="project" value="UniProtKB-SubCell"/>
</dbReference>
<dbReference type="GO" id="GO:0045277">
    <property type="term" value="C:respiratory chain complex IV"/>
    <property type="evidence" value="ECO:0000250"/>
    <property type="project" value="UniProtKB"/>
</dbReference>
<dbReference type="GO" id="GO:0005507">
    <property type="term" value="F:copper ion binding"/>
    <property type="evidence" value="ECO:0007669"/>
    <property type="project" value="InterPro"/>
</dbReference>
<dbReference type="GO" id="GO:0004129">
    <property type="term" value="F:cytochrome-c oxidase activity"/>
    <property type="evidence" value="ECO:0007669"/>
    <property type="project" value="UniProtKB-EC"/>
</dbReference>
<dbReference type="GO" id="GO:0042773">
    <property type="term" value="P:ATP synthesis coupled electron transport"/>
    <property type="evidence" value="ECO:0007669"/>
    <property type="project" value="TreeGrafter"/>
</dbReference>
<dbReference type="CDD" id="cd13912">
    <property type="entry name" value="CcO_II_C"/>
    <property type="match status" value="1"/>
</dbReference>
<dbReference type="FunFam" id="1.10.287.90:FF:000001">
    <property type="entry name" value="Cytochrome c oxidase subunit 2"/>
    <property type="match status" value="1"/>
</dbReference>
<dbReference type="FunFam" id="2.60.40.420:FF:000001">
    <property type="entry name" value="Cytochrome c oxidase subunit 2"/>
    <property type="match status" value="1"/>
</dbReference>
<dbReference type="Gene3D" id="1.10.287.90">
    <property type="match status" value="1"/>
</dbReference>
<dbReference type="Gene3D" id="2.60.40.420">
    <property type="entry name" value="Cupredoxins - blue copper proteins"/>
    <property type="match status" value="1"/>
</dbReference>
<dbReference type="InterPro" id="IPR045187">
    <property type="entry name" value="CcO_II"/>
</dbReference>
<dbReference type="InterPro" id="IPR002429">
    <property type="entry name" value="CcO_II-like_C"/>
</dbReference>
<dbReference type="InterPro" id="IPR034210">
    <property type="entry name" value="CcO_II_C"/>
</dbReference>
<dbReference type="InterPro" id="IPR001505">
    <property type="entry name" value="Copper_CuA"/>
</dbReference>
<dbReference type="InterPro" id="IPR008972">
    <property type="entry name" value="Cupredoxin"/>
</dbReference>
<dbReference type="InterPro" id="IPR014222">
    <property type="entry name" value="Cyt_c_oxidase_su2"/>
</dbReference>
<dbReference type="InterPro" id="IPR011759">
    <property type="entry name" value="Cyt_c_oxidase_su2_TM_dom"/>
</dbReference>
<dbReference type="InterPro" id="IPR036257">
    <property type="entry name" value="Cyt_c_oxidase_su2_TM_sf"/>
</dbReference>
<dbReference type="NCBIfam" id="TIGR02866">
    <property type="entry name" value="CoxB"/>
    <property type="match status" value="1"/>
</dbReference>
<dbReference type="PANTHER" id="PTHR22888:SF9">
    <property type="entry name" value="CYTOCHROME C OXIDASE SUBUNIT 2"/>
    <property type="match status" value="1"/>
</dbReference>
<dbReference type="PANTHER" id="PTHR22888">
    <property type="entry name" value="CYTOCHROME C OXIDASE, SUBUNIT II"/>
    <property type="match status" value="1"/>
</dbReference>
<dbReference type="Pfam" id="PF00116">
    <property type="entry name" value="COX2"/>
    <property type="match status" value="1"/>
</dbReference>
<dbReference type="Pfam" id="PF02790">
    <property type="entry name" value="COX2_TM"/>
    <property type="match status" value="1"/>
</dbReference>
<dbReference type="PRINTS" id="PR01166">
    <property type="entry name" value="CYCOXIDASEII"/>
</dbReference>
<dbReference type="SUPFAM" id="SSF49503">
    <property type="entry name" value="Cupredoxins"/>
    <property type="match status" value="1"/>
</dbReference>
<dbReference type="SUPFAM" id="SSF81464">
    <property type="entry name" value="Cytochrome c oxidase subunit II-like, transmembrane region"/>
    <property type="match status" value="1"/>
</dbReference>
<dbReference type="PROSITE" id="PS00078">
    <property type="entry name" value="COX2"/>
    <property type="match status" value="1"/>
</dbReference>
<dbReference type="PROSITE" id="PS50857">
    <property type="entry name" value="COX2_CUA"/>
    <property type="match status" value="1"/>
</dbReference>
<dbReference type="PROSITE" id="PS50999">
    <property type="entry name" value="COX2_TM"/>
    <property type="match status" value="1"/>
</dbReference>
<proteinExistence type="inferred from homology"/>
<evidence type="ECO:0000250" key="1">
    <source>
        <dbReference type="UniProtKB" id="P00403"/>
    </source>
</evidence>
<evidence type="ECO:0000250" key="2">
    <source>
        <dbReference type="UniProtKB" id="P00410"/>
    </source>
</evidence>
<evidence type="ECO:0000250" key="3">
    <source>
        <dbReference type="UniProtKB" id="P68530"/>
    </source>
</evidence>
<evidence type="ECO:0000305" key="4"/>
<feature type="chain" id="PRO_0000254928" description="Cytochrome c oxidase subunit 2">
    <location>
        <begin position="1"/>
        <end position="227"/>
    </location>
</feature>
<feature type="topological domain" description="Mitochondrial intermembrane" evidence="3">
    <location>
        <begin position="1"/>
        <end position="14"/>
    </location>
</feature>
<feature type="transmembrane region" description="Helical; Name=I" evidence="3">
    <location>
        <begin position="15"/>
        <end position="45"/>
    </location>
</feature>
<feature type="topological domain" description="Mitochondrial matrix" evidence="3">
    <location>
        <begin position="46"/>
        <end position="59"/>
    </location>
</feature>
<feature type="transmembrane region" description="Helical; Name=II" evidence="3">
    <location>
        <begin position="60"/>
        <end position="87"/>
    </location>
</feature>
<feature type="topological domain" description="Mitochondrial intermembrane" evidence="3">
    <location>
        <begin position="88"/>
        <end position="227"/>
    </location>
</feature>
<feature type="binding site" evidence="3">
    <location>
        <position position="161"/>
    </location>
    <ligand>
        <name>Cu cation</name>
        <dbReference type="ChEBI" id="CHEBI:23378"/>
        <label>A1</label>
    </ligand>
</feature>
<feature type="binding site" evidence="3">
    <location>
        <position position="196"/>
    </location>
    <ligand>
        <name>Cu cation</name>
        <dbReference type="ChEBI" id="CHEBI:23378"/>
        <label>A1</label>
    </ligand>
</feature>
<feature type="binding site" evidence="3">
    <location>
        <position position="196"/>
    </location>
    <ligand>
        <name>Cu cation</name>
        <dbReference type="ChEBI" id="CHEBI:23378"/>
        <label>A2</label>
    </ligand>
</feature>
<feature type="binding site" evidence="3">
    <location>
        <position position="198"/>
    </location>
    <ligand>
        <name>Cu cation</name>
        <dbReference type="ChEBI" id="CHEBI:23378"/>
        <label>A2</label>
    </ligand>
</feature>
<feature type="binding site" evidence="3">
    <location>
        <position position="198"/>
    </location>
    <ligand>
        <name>Mg(2+)</name>
        <dbReference type="ChEBI" id="CHEBI:18420"/>
        <note>ligand shared with MT-CO1</note>
    </ligand>
</feature>
<feature type="binding site" evidence="3">
    <location>
        <position position="200"/>
    </location>
    <ligand>
        <name>Cu cation</name>
        <dbReference type="ChEBI" id="CHEBI:23378"/>
        <label>A1</label>
    </ligand>
</feature>
<feature type="binding site" evidence="3">
    <location>
        <position position="200"/>
    </location>
    <ligand>
        <name>Cu cation</name>
        <dbReference type="ChEBI" id="CHEBI:23378"/>
        <label>A2</label>
    </ligand>
</feature>
<feature type="binding site" evidence="3">
    <location>
        <position position="204"/>
    </location>
    <ligand>
        <name>Cu cation</name>
        <dbReference type="ChEBI" id="CHEBI:23378"/>
        <label>A2</label>
    </ligand>
</feature>
<feature type="binding site" evidence="3">
    <location>
        <position position="207"/>
    </location>
    <ligand>
        <name>Cu cation</name>
        <dbReference type="ChEBI" id="CHEBI:23378"/>
        <label>A1</label>
    </ligand>
</feature>
<gene>
    <name type="primary">MT-CO2</name>
    <name type="synonym">COII</name>
    <name type="synonym">COXII</name>
    <name type="synonym">MTCO2</name>
</gene>
<geneLocation type="mitochondrion"/>
<reference key="1">
    <citation type="journal article" date="2005" name="Mol. Phylogenet. Evol.">
        <title>Multigene phylogeny of the Old World mice, Murinae, reveals distinct geographic lineages and the declining utility of mitochondrial genes compared to nuclear genes.</title>
        <authorList>
            <person name="Steppan S.J."/>
            <person name="Adkins R.M."/>
            <person name="Spinks P.Q."/>
            <person name="Hale C."/>
        </authorList>
    </citation>
    <scope>NUCLEOTIDE SEQUENCE [GENOMIC DNA]</scope>
</reference>
<sequence>MAYPFQLGLQDASSPIMEELTNFHDHTLMIVFLISSLVLYIISSMLTTKMTHTSTMDAQEVETIWTVLPAVILILIALPSLRILYMMDEINNPVLTVKTMGHQWYWSYEYTDYESLCFDSYMVPTNDLKPGELRLLEVDNRVVLPMELPIRMLISSEDVLHSWAVPSLGLKTDAIPGRLNQATLTSNRPGLFYGQCSEICGSNHSFMPIVLEMVPLKHFENWSTSMI</sequence>
<keyword id="KW-0186">Copper</keyword>
<keyword id="KW-0249">Electron transport</keyword>
<keyword id="KW-0460">Magnesium</keyword>
<keyword id="KW-0472">Membrane</keyword>
<keyword id="KW-0479">Metal-binding</keyword>
<keyword id="KW-0496">Mitochondrion</keyword>
<keyword id="KW-0999">Mitochondrion inner membrane</keyword>
<keyword id="KW-0679">Respiratory chain</keyword>
<keyword id="KW-1278">Translocase</keyword>
<keyword id="KW-0812">Transmembrane</keyword>
<keyword id="KW-1133">Transmembrane helix</keyword>
<keyword id="KW-0813">Transport</keyword>
<accession>Q38S47</accession>
<comment type="function">
    <text evidence="2">Component of the cytochrome c oxidase, the last enzyme in the mitochondrial electron transport chain which drives oxidative phosphorylation. The respiratory chain contains 3 multisubunit complexes succinate dehydrogenase (complex II, CII), ubiquinol-cytochrome c oxidoreductase (cytochrome b-c1 complex, complex III, CIII) and cytochrome c oxidase (complex IV, CIV), that cooperate to transfer electrons derived from NADH and succinate to molecular oxygen, creating an electrochemical gradient over the inner membrane that drives transmembrane transport and the ATP synthase. Cytochrome c oxidase is the component of the respiratory chain that catalyzes the reduction of oxygen to water. Electrons originating from reduced cytochrome c in the intermembrane space (IMS) are transferred via the dinuclear copper A center (CU(A)) of subunit 2 and heme A of subunit 1 to the active site in subunit 1, a binuclear center (BNC) formed by heme A3 and copper B (CU(B)). The BNC reduces molecular oxygen to 2 water molecules using 4 electrons from cytochrome c in the IMS and 4 protons from the mitochondrial matrix.</text>
</comment>
<comment type="catalytic activity">
    <reaction evidence="2">
        <text>4 Fe(II)-[cytochrome c] + O2 + 8 H(+)(in) = 4 Fe(III)-[cytochrome c] + 2 H2O + 4 H(+)(out)</text>
        <dbReference type="Rhea" id="RHEA:11436"/>
        <dbReference type="Rhea" id="RHEA-COMP:10350"/>
        <dbReference type="Rhea" id="RHEA-COMP:14399"/>
        <dbReference type="ChEBI" id="CHEBI:15377"/>
        <dbReference type="ChEBI" id="CHEBI:15378"/>
        <dbReference type="ChEBI" id="CHEBI:15379"/>
        <dbReference type="ChEBI" id="CHEBI:29033"/>
        <dbReference type="ChEBI" id="CHEBI:29034"/>
        <dbReference type="EC" id="7.1.1.9"/>
    </reaction>
    <physiologicalReaction direction="left-to-right" evidence="2">
        <dbReference type="Rhea" id="RHEA:11437"/>
    </physiologicalReaction>
</comment>
<comment type="cofactor">
    <cofactor evidence="3">
        <name>Cu cation</name>
        <dbReference type="ChEBI" id="CHEBI:23378"/>
    </cofactor>
    <text evidence="3">Binds a dinuclear copper A center per subunit.</text>
</comment>
<comment type="subunit">
    <text evidence="1 3">Component of the cytochrome c oxidase (complex IV, CIV), a multisubunit enzyme composed of 14 subunits. The complex is composed of a catalytic core of 3 subunits MT-CO1, MT-CO2 and MT-CO3, encoded in the mitochondrial DNA, and 11 supernumerary subunits COX4I, COX5A, COX5B, COX6A, COX6B, COX6C, COX7A, COX7B, COX7C, COX8 and NDUFA4, which are encoded in the nuclear genome. The complex exists as a monomer or a dimer and forms supercomplexes (SCs) in the inner mitochondrial membrane with NADH-ubiquinone oxidoreductase (complex I, CI) and ubiquinol-cytochrome c oxidoreductase (cytochrome b-c1 complex, complex III, CIII), resulting in different assemblies (supercomplex SCI(1)III(2)IV(1) and megacomplex MCI(2)III(2)IV(2)) (By similarity). Found in a complex with TMEM177, COA6, COX18, COX20, SCO1 and SCO2. Interacts with TMEM177 in a COX20-dependent manner. Interacts with COX20. Interacts with COX16 (By similarity).</text>
</comment>
<comment type="subcellular location">
    <subcellularLocation>
        <location evidence="3">Mitochondrion inner membrane</location>
        <topology evidence="3">Multi-pass membrane protein</topology>
    </subcellularLocation>
</comment>
<comment type="similarity">
    <text evidence="4">Belongs to the cytochrome c oxidase subunit 2 family.</text>
</comment>
<protein>
    <recommendedName>
        <fullName>Cytochrome c oxidase subunit 2</fullName>
        <ecNumber>7.1.1.9</ecNumber>
    </recommendedName>
    <alternativeName>
        <fullName>Cytochrome c oxidase polypeptide II</fullName>
    </alternativeName>
</protein>
<name>COX2_LOPFL</name>